<sequence>MRNYELMIILDPEVDERTVAPSLDKFLSVIKTGGGSVDNVDIWGKRRLAYEINKRAEGIYAVVNLTATPDLAKELDRQLGLNEAVLRTKLIRPDAH</sequence>
<dbReference type="EMBL" id="CP001618">
    <property type="protein sequence ID" value="ACQ82419.1"/>
    <property type="molecule type" value="Genomic_DNA"/>
</dbReference>
<dbReference type="RefSeq" id="WP_015884656.1">
    <property type="nucleotide sequence ID" value="NC_012669.1"/>
</dbReference>
<dbReference type="SMR" id="C5C661"/>
<dbReference type="STRING" id="471853.Bcav_4181"/>
<dbReference type="KEGG" id="bcv:Bcav_4181"/>
<dbReference type="eggNOG" id="COG0360">
    <property type="taxonomic scope" value="Bacteria"/>
</dbReference>
<dbReference type="HOGENOM" id="CLU_113441_5_3_11"/>
<dbReference type="Proteomes" id="UP000007962">
    <property type="component" value="Chromosome"/>
</dbReference>
<dbReference type="GO" id="GO:0005737">
    <property type="term" value="C:cytoplasm"/>
    <property type="evidence" value="ECO:0007669"/>
    <property type="project" value="UniProtKB-ARBA"/>
</dbReference>
<dbReference type="GO" id="GO:1990904">
    <property type="term" value="C:ribonucleoprotein complex"/>
    <property type="evidence" value="ECO:0007669"/>
    <property type="project" value="UniProtKB-KW"/>
</dbReference>
<dbReference type="GO" id="GO:0005840">
    <property type="term" value="C:ribosome"/>
    <property type="evidence" value="ECO:0007669"/>
    <property type="project" value="UniProtKB-KW"/>
</dbReference>
<dbReference type="GO" id="GO:0070181">
    <property type="term" value="F:small ribosomal subunit rRNA binding"/>
    <property type="evidence" value="ECO:0007669"/>
    <property type="project" value="TreeGrafter"/>
</dbReference>
<dbReference type="GO" id="GO:0003735">
    <property type="term" value="F:structural constituent of ribosome"/>
    <property type="evidence" value="ECO:0007669"/>
    <property type="project" value="InterPro"/>
</dbReference>
<dbReference type="GO" id="GO:0006412">
    <property type="term" value="P:translation"/>
    <property type="evidence" value="ECO:0007669"/>
    <property type="project" value="UniProtKB-UniRule"/>
</dbReference>
<dbReference type="CDD" id="cd00473">
    <property type="entry name" value="bS6"/>
    <property type="match status" value="1"/>
</dbReference>
<dbReference type="FunFam" id="3.30.70.60:FF:000002">
    <property type="entry name" value="30S ribosomal protein S6"/>
    <property type="match status" value="1"/>
</dbReference>
<dbReference type="Gene3D" id="3.30.70.60">
    <property type="match status" value="1"/>
</dbReference>
<dbReference type="HAMAP" id="MF_00360">
    <property type="entry name" value="Ribosomal_bS6"/>
    <property type="match status" value="1"/>
</dbReference>
<dbReference type="InterPro" id="IPR000529">
    <property type="entry name" value="Ribosomal_bS6"/>
</dbReference>
<dbReference type="InterPro" id="IPR020815">
    <property type="entry name" value="Ribosomal_bS6_CS"/>
</dbReference>
<dbReference type="InterPro" id="IPR035980">
    <property type="entry name" value="Ribosomal_bS6_sf"/>
</dbReference>
<dbReference type="InterPro" id="IPR020814">
    <property type="entry name" value="Ribosomal_S6_plastid/chlpt"/>
</dbReference>
<dbReference type="InterPro" id="IPR014717">
    <property type="entry name" value="Transl_elong_EF1B/ribsomal_bS6"/>
</dbReference>
<dbReference type="NCBIfam" id="TIGR00166">
    <property type="entry name" value="S6"/>
    <property type="match status" value="1"/>
</dbReference>
<dbReference type="PANTHER" id="PTHR21011">
    <property type="entry name" value="MITOCHONDRIAL 28S RIBOSOMAL PROTEIN S6"/>
    <property type="match status" value="1"/>
</dbReference>
<dbReference type="PANTHER" id="PTHR21011:SF1">
    <property type="entry name" value="SMALL RIBOSOMAL SUBUNIT PROTEIN BS6M"/>
    <property type="match status" value="1"/>
</dbReference>
<dbReference type="Pfam" id="PF01250">
    <property type="entry name" value="Ribosomal_S6"/>
    <property type="match status" value="1"/>
</dbReference>
<dbReference type="SUPFAM" id="SSF54995">
    <property type="entry name" value="Ribosomal protein S6"/>
    <property type="match status" value="1"/>
</dbReference>
<dbReference type="PROSITE" id="PS01048">
    <property type="entry name" value="RIBOSOMAL_S6"/>
    <property type="match status" value="1"/>
</dbReference>
<proteinExistence type="inferred from homology"/>
<keyword id="KW-1185">Reference proteome</keyword>
<keyword id="KW-0687">Ribonucleoprotein</keyword>
<keyword id="KW-0689">Ribosomal protein</keyword>
<keyword id="KW-0694">RNA-binding</keyword>
<keyword id="KW-0699">rRNA-binding</keyword>
<feature type="chain" id="PRO_1000205389" description="Small ribosomal subunit protein bS6">
    <location>
        <begin position="1"/>
        <end position="96"/>
    </location>
</feature>
<reference key="1">
    <citation type="journal article" date="2009" name="Stand. Genomic Sci.">
        <title>Complete genome sequence of Beutenbergia cavernae type strain (HKI 0122).</title>
        <authorList>
            <person name="Land M."/>
            <person name="Pukall R."/>
            <person name="Abt B."/>
            <person name="Goker M."/>
            <person name="Rohde M."/>
            <person name="Glavina Del Rio T."/>
            <person name="Tice H."/>
            <person name="Copeland A."/>
            <person name="Cheng J.F."/>
            <person name="Lucas S."/>
            <person name="Chen F."/>
            <person name="Nolan M."/>
            <person name="Bruce D."/>
            <person name="Goodwin L."/>
            <person name="Pitluck S."/>
            <person name="Ivanova N."/>
            <person name="Mavromatis K."/>
            <person name="Ovchinnikova G."/>
            <person name="Pati A."/>
            <person name="Chen A."/>
            <person name="Palaniappan K."/>
            <person name="Hauser L."/>
            <person name="Chang Y.J."/>
            <person name="Jefferies C.C."/>
            <person name="Saunders E."/>
            <person name="Brettin T."/>
            <person name="Detter J.C."/>
            <person name="Han C."/>
            <person name="Chain P."/>
            <person name="Bristow J."/>
            <person name="Eisen J.A."/>
            <person name="Markowitz V."/>
            <person name="Hugenholtz P."/>
            <person name="Kyrpides N.C."/>
            <person name="Klenk H.P."/>
            <person name="Lapidus A."/>
        </authorList>
    </citation>
    <scope>NUCLEOTIDE SEQUENCE [LARGE SCALE GENOMIC DNA]</scope>
    <source>
        <strain>ATCC BAA-8 / DSM 12333 / CCUG 43141 / JCM 11478 / NBRC 16432 / NCIMB 13614 / HKI 0122</strain>
    </source>
</reference>
<name>RS6_BEUC1</name>
<accession>C5C661</accession>
<protein>
    <recommendedName>
        <fullName evidence="1">Small ribosomal subunit protein bS6</fullName>
    </recommendedName>
    <alternativeName>
        <fullName evidence="2">30S ribosomal protein S6</fullName>
    </alternativeName>
</protein>
<gene>
    <name evidence="1" type="primary">rpsF</name>
    <name type="ordered locus">Bcav_4181</name>
</gene>
<organism>
    <name type="scientific">Beutenbergia cavernae (strain ATCC BAA-8 / DSM 12333 / CCUG 43141 / JCM 11478 / NBRC 16432 / NCIMB 13614 / HKI 0122)</name>
    <dbReference type="NCBI Taxonomy" id="471853"/>
    <lineage>
        <taxon>Bacteria</taxon>
        <taxon>Bacillati</taxon>
        <taxon>Actinomycetota</taxon>
        <taxon>Actinomycetes</taxon>
        <taxon>Micrococcales</taxon>
        <taxon>Beutenbergiaceae</taxon>
        <taxon>Beutenbergia</taxon>
    </lineage>
</organism>
<evidence type="ECO:0000255" key="1">
    <source>
        <dbReference type="HAMAP-Rule" id="MF_00360"/>
    </source>
</evidence>
<evidence type="ECO:0000305" key="2"/>
<comment type="function">
    <text evidence="1">Binds together with bS18 to 16S ribosomal RNA.</text>
</comment>
<comment type="similarity">
    <text evidence="1">Belongs to the bacterial ribosomal protein bS6 family.</text>
</comment>